<gene>
    <name type="primary">Tatdn3</name>
</gene>
<comment type="function">
    <text evidence="1">Exhibits 3'-exonuclease activities and apurinic/apyrimidinic (AP) endonuclease (in vitro). Show preferential AP endonuclease activity on double-stranded DNA substrates and 3'- exonuclease activity on single-stranded DNA.</text>
</comment>
<comment type="cofactor">
    <cofactor evidence="1">
        <name>Mn(2+)</name>
        <dbReference type="ChEBI" id="CHEBI:29035"/>
    </cofactor>
    <cofactor evidence="1">
        <name>Ca(2+)</name>
        <dbReference type="ChEBI" id="CHEBI:29108"/>
    </cofactor>
    <cofactor evidence="1">
        <name>Mg(2+)</name>
        <dbReference type="ChEBI" id="CHEBI:18420"/>
    </cofactor>
    <cofactor evidence="1">
        <name>Zn(2+)</name>
        <dbReference type="ChEBI" id="CHEBI:29105"/>
    </cofactor>
    <text evidence="1 2">Binds 2 Zn(2+) per subunit (By similarity). Exhibits AP endonuclease and 3'-exonuclease activities in the presence of Mg(2+) and Mn(2+). In contrast, in the presence of Ca(2+), shows AP endonuclease activity exclusively (By similarity).</text>
</comment>
<comment type="activity regulation">
    <text evidence="1">The 3'-exonuclease activity is sensitive to the metal ion present in the active site, whereas the AP endodeoxyribonuclease activity is observed in a variety of divalent metal cofactors. 3'-exoxonuclease activity is suppressed in the presence of Ca(2+), Zn(2+) and Ni(2+).</text>
</comment>
<comment type="subcellular location">
    <subcellularLocation>
        <location evidence="5">Nucleus</location>
    </subcellularLocation>
</comment>
<comment type="alternative products">
    <event type="alternative splicing"/>
    <isoform>
        <id>Q3U1C6-1</id>
        <name>1</name>
        <sequence type="displayed"/>
    </isoform>
    <isoform>
        <id>Q3U1C6-2</id>
        <name>2</name>
        <sequence type="described" ref="VSP_030051"/>
    </isoform>
    <isoform>
        <id>Q3U1C6-3</id>
        <name>3</name>
        <sequence type="described" ref="VSP_030049 VSP_030050"/>
    </isoform>
</comment>
<comment type="similarity">
    <text evidence="5">Belongs to the metallo-dependent hydrolases superfamily. TatD-type hydrolase family.</text>
</comment>
<comment type="sequence caution" evidence="5">
    <conflict type="erroneous initiation">
        <sequence resource="EMBL-CDS" id="AAH61248"/>
    </conflict>
</comment>
<accession>Q3U1C6</accession>
<accession>Q6P8H6</accession>
<accession>Q9DB58</accession>
<reference key="1">
    <citation type="journal article" date="2005" name="Science">
        <title>The transcriptional landscape of the mammalian genome.</title>
        <authorList>
            <person name="Carninci P."/>
            <person name="Kasukawa T."/>
            <person name="Katayama S."/>
            <person name="Gough J."/>
            <person name="Frith M.C."/>
            <person name="Maeda N."/>
            <person name="Oyama R."/>
            <person name="Ravasi T."/>
            <person name="Lenhard B."/>
            <person name="Wells C."/>
            <person name="Kodzius R."/>
            <person name="Shimokawa K."/>
            <person name="Bajic V.B."/>
            <person name="Brenner S.E."/>
            <person name="Batalov S."/>
            <person name="Forrest A.R."/>
            <person name="Zavolan M."/>
            <person name="Davis M.J."/>
            <person name="Wilming L.G."/>
            <person name="Aidinis V."/>
            <person name="Allen J.E."/>
            <person name="Ambesi-Impiombato A."/>
            <person name="Apweiler R."/>
            <person name="Aturaliya R.N."/>
            <person name="Bailey T.L."/>
            <person name="Bansal M."/>
            <person name="Baxter L."/>
            <person name="Beisel K.W."/>
            <person name="Bersano T."/>
            <person name="Bono H."/>
            <person name="Chalk A.M."/>
            <person name="Chiu K.P."/>
            <person name="Choudhary V."/>
            <person name="Christoffels A."/>
            <person name="Clutterbuck D.R."/>
            <person name="Crowe M.L."/>
            <person name="Dalla E."/>
            <person name="Dalrymple B.P."/>
            <person name="de Bono B."/>
            <person name="Della Gatta G."/>
            <person name="di Bernardo D."/>
            <person name="Down T."/>
            <person name="Engstrom P."/>
            <person name="Fagiolini M."/>
            <person name="Faulkner G."/>
            <person name="Fletcher C.F."/>
            <person name="Fukushima T."/>
            <person name="Furuno M."/>
            <person name="Futaki S."/>
            <person name="Gariboldi M."/>
            <person name="Georgii-Hemming P."/>
            <person name="Gingeras T.R."/>
            <person name="Gojobori T."/>
            <person name="Green R.E."/>
            <person name="Gustincich S."/>
            <person name="Harbers M."/>
            <person name="Hayashi Y."/>
            <person name="Hensch T.K."/>
            <person name="Hirokawa N."/>
            <person name="Hill D."/>
            <person name="Huminiecki L."/>
            <person name="Iacono M."/>
            <person name="Ikeo K."/>
            <person name="Iwama A."/>
            <person name="Ishikawa T."/>
            <person name="Jakt M."/>
            <person name="Kanapin A."/>
            <person name="Katoh M."/>
            <person name="Kawasawa Y."/>
            <person name="Kelso J."/>
            <person name="Kitamura H."/>
            <person name="Kitano H."/>
            <person name="Kollias G."/>
            <person name="Krishnan S.P."/>
            <person name="Kruger A."/>
            <person name="Kummerfeld S.K."/>
            <person name="Kurochkin I.V."/>
            <person name="Lareau L.F."/>
            <person name="Lazarevic D."/>
            <person name="Lipovich L."/>
            <person name="Liu J."/>
            <person name="Liuni S."/>
            <person name="McWilliam S."/>
            <person name="Madan Babu M."/>
            <person name="Madera M."/>
            <person name="Marchionni L."/>
            <person name="Matsuda H."/>
            <person name="Matsuzawa S."/>
            <person name="Miki H."/>
            <person name="Mignone F."/>
            <person name="Miyake S."/>
            <person name="Morris K."/>
            <person name="Mottagui-Tabar S."/>
            <person name="Mulder N."/>
            <person name="Nakano N."/>
            <person name="Nakauchi H."/>
            <person name="Ng P."/>
            <person name="Nilsson R."/>
            <person name="Nishiguchi S."/>
            <person name="Nishikawa S."/>
            <person name="Nori F."/>
            <person name="Ohara O."/>
            <person name="Okazaki Y."/>
            <person name="Orlando V."/>
            <person name="Pang K.C."/>
            <person name="Pavan W.J."/>
            <person name="Pavesi G."/>
            <person name="Pesole G."/>
            <person name="Petrovsky N."/>
            <person name="Piazza S."/>
            <person name="Reed J."/>
            <person name="Reid J.F."/>
            <person name="Ring B.Z."/>
            <person name="Ringwald M."/>
            <person name="Rost B."/>
            <person name="Ruan Y."/>
            <person name="Salzberg S.L."/>
            <person name="Sandelin A."/>
            <person name="Schneider C."/>
            <person name="Schoenbach C."/>
            <person name="Sekiguchi K."/>
            <person name="Semple C.A."/>
            <person name="Seno S."/>
            <person name="Sessa L."/>
            <person name="Sheng Y."/>
            <person name="Shibata Y."/>
            <person name="Shimada H."/>
            <person name="Shimada K."/>
            <person name="Silva D."/>
            <person name="Sinclair B."/>
            <person name="Sperling S."/>
            <person name="Stupka E."/>
            <person name="Sugiura K."/>
            <person name="Sultana R."/>
            <person name="Takenaka Y."/>
            <person name="Taki K."/>
            <person name="Tammoja K."/>
            <person name="Tan S.L."/>
            <person name="Tang S."/>
            <person name="Taylor M.S."/>
            <person name="Tegner J."/>
            <person name="Teichmann S.A."/>
            <person name="Ueda H.R."/>
            <person name="van Nimwegen E."/>
            <person name="Verardo R."/>
            <person name="Wei C.L."/>
            <person name="Yagi K."/>
            <person name="Yamanishi H."/>
            <person name="Zabarovsky E."/>
            <person name="Zhu S."/>
            <person name="Zimmer A."/>
            <person name="Hide W."/>
            <person name="Bult C."/>
            <person name="Grimmond S.M."/>
            <person name="Teasdale R.D."/>
            <person name="Liu E.T."/>
            <person name="Brusic V."/>
            <person name="Quackenbush J."/>
            <person name="Wahlestedt C."/>
            <person name="Mattick J.S."/>
            <person name="Hume D.A."/>
            <person name="Kai C."/>
            <person name="Sasaki D."/>
            <person name="Tomaru Y."/>
            <person name="Fukuda S."/>
            <person name="Kanamori-Katayama M."/>
            <person name="Suzuki M."/>
            <person name="Aoki J."/>
            <person name="Arakawa T."/>
            <person name="Iida J."/>
            <person name="Imamura K."/>
            <person name="Itoh M."/>
            <person name="Kato T."/>
            <person name="Kawaji H."/>
            <person name="Kawagashira N."/>
            <person name="Kawashima T."/>
            <person name="Kojima M."/>
            <person name="Kondo S."/>
            <person name="Konno H."/>
            <person name="Nakano K."/>
            <person name="Ninomiya N."/>
            <person name="Nishio T."/>
            <person name="Okada M."/>
            <person name="Plessy C."/>
            <person name="Shibata K."/>
            <person name="Shiraki T."/>
            <person name="Suzuki S."/>
            <person name="Tagami M."/>
            <person name="Waki K."/>
            <person name="Watahiki A."/>
            <person name="Okamura-Oho Y."/>
            <person name="Suzuki H."/>
            <person name="Kawai J."/>
            <person name="Hayashizaki Y."/>
        </authorList>
    </citation>
    <scope>NUCLEOTIDE SEQUENCE [LARGE SCALE MRNA] (ISOFORMS 1 AND 3)</scope>
    <source>
        <strain>C57BL/6J</strain>
        <strain>NOD</strain>
        <tissue>Cerebellum</tissue>
        <tissue>Spleen</tissue>
    </source>
</reference>
<reference key="2">
    <citation type="journal article" date="2004" name="Genome Res.">
        <title>The status, quality, and expansion of the NIH full-length cDNA project: the Mammalian Gene Collection (MGC).</title>
        <authorList>
            <consortium name="The MGC Project Team"/>
        </authorList>
    </citation>
    <scope>NUCLEOTIDE SEQUENCE [LARGE SCALE MRNA] (ISOFORM 2)</scope>
</reference>
<reference key="3">
    <citation type="journal article" date="2010" name="Cell">
        <title>A tissue-specific atlas of mouse protein phosphorylation and expression.</title>
        <authorList>
            <person name="Huttlin E.L."/>
            <person name="Jedrychowski M.P."/>
            <person name="Elias J.E."/>
            <person name="Goswami T."/>
            <person name="Rad R."/>
            <person name="Beausoleil S.A."/>
            <person name="Villen J."/>
            <person name="Haas W."/>
            <person name="Sowa M.E."/>
            <person name="Gygi S.P."/>
        </authorList>
    </citation>
    <scope>IDENTIFICATION BY MASS SPECTROMETRY [LARGE SCALE ANALYSIS]</scope>
    <source>
        <tissue>Testis</tissue>
    </source>
</reference>
<dbReference type="EC" id="3.1.21.-"/>
<dbReference type="EMBL" id="AK005193">
    <property type="protein sequence ID" value="BAB23875.1"/>
    <property type="molecule type" value="mRNA"/>
</dbReference>
<dbReference type="EMBL" id="AK156071">
    <property type="protein sequence ID" value="BAE33572.1"/>
    <property type="molecule type" value="mRNA"/>
</dbReference>
<dbReference type="EMBL" id="BC061248">
    <property type="protein sequence ID" value="AAH61248.1"/>
    <property type="status" value="ALT_INIT"/>
    <property type="molecule type" value="mRNA"/>
</dbReference>
<dbReference type="CCDS" id="CCDS48484.1">
    <molecule id="Q3U1C6-3"/>
</dbReference>
<dbReference type="CCDS" id="CCDS48485.1">
    <molecule id="Q3U1C6-1"/>
</dbReference>
<dbReference type="RefSeq" id="NP_001156894.1">
    <molecule id="Q3U1C6-3"/>
    <property type="nucleotide sequence ID" value="NM_001163422.1"/>
</dbReference>
<dbReference type="SMR" id="Q3U1C6"/>
<dbReference type="BioGRID" id="213150">
    <property type="interactions" value="1"/>
</dbReference>
<dbReference type="FunCoup" id="Q3U1C6">
    <property type="interactions" value="733"/>
</dbReference>
<dbReference type="STRING" id="10090.ENSMUSP00000106518"/>
<dbReference type="PhosphoSitePlus" id="Q3U1C6"/>
<dbReference type="PaxDb" id="10090-ENSMUSP00000106518"/>
<dbReference type="ProteomicsDB" id="263253">
    <molecule id="Q3U1C6-1"/>
</dbReference>
<dbReference type="ProteomicsDB" id="263254">
    <molecule id="Q3U1C6-2"/>
</dbReference>
<dbReference type="ProteomicsDB" id="263255">
    <molecule id="Q3U1C6-3"/>
</dbReference>
<dbReference type="Pumba" id="Q3U1C6"/>
<dbReference type="Antibodypedia" id="51781">
    <property type="antibodies" value="30 antibodies from 13 providers"/>
</dbReference>
<dbReference type="Ensembl" id="ENSMUST00000085633.12">
    <molecule id="Q3U1C6-3"/>
    <property type="protein sequence ID" value="ENSMUSP00000082773.6"/>
    <property type="gene ID" value="ENSMUSG00000026632.18"/>
</dbReference>
<dbReference type="GeneID" id="68972"/>
<dbReference type="KEGG" id="mmu:68972"/>
<dbReference type="UCSC" id="uc007ebz.2">
    <molecule id="Q3U1C6-3"/>
    <property type="organism name" value="mouse"/>
</dbReference>
<dbReference type="AGR" id="MGI:1916222"/>
<dbReference type="CTD" id="128387"/>
<dbReference type="MGI" id="MGI:1916222">
    <property type="gene designation" value="Tatdn3"/>
</dbReference>
<dbReference type="VEuPathDB" id="HostDB:ENSMUSG00000026632"/>
<dbReference type="eggNOG" id="KOG3020">
    <property type="taxonomic scope" value="Eukaryota"/>
</dbReference>
<dbReference type="GeneTree" id="ENSGT00720000108846"/>
<dbReference type="HOGENOM" id="CLU_031506_7_0_1"/>
<dbReference type="InParanoid" id="Q3U1C6"/>
<dbReference type="OrthoDB" id="413993at2759"/>
<dbReference type="BioGRID-ORCS" id="68972">
    <property type="hits" value="2 hits in 76 CRISPR screens"/>
</dbReference>
<dbReference type="ChiTaRS" id="Tatdn3">
    <property type="organism name" value="mouse"/>
</dbReference>
<dbReference type="PRO" id="PR:Q3U1C6"/>
<dbReference type="Proteomes" id="UP000000589">
    <property type="component" value="Chromosome 1"/>
</dbReference>
<dbReference type="RNAct" id="Q3U1C6">
    <property type="molecule type" value="protein"/>
</dbReference>
<dbReference type="Bgee" id="ENSMUSG00000026632">
    <property type="expression patterns" value="Expressed in spermatocyte and 219 other cell types or tissues"/>
</dbReference>
<dbReference type="ExpressionAtlas" id="Q3U1C6">
    <property type="expression patterns" value="baseline and differential"/>
</dbReference>
<dbReference type="GO" id="GO:0005739">
    <property type="term" value="C:mitochondrion"/>
    <property type="evidence" value="ECO:0007005"/>
    <property type="project" value="MGI"/>
</dbReference>
<dbReference type="GO" id="GO:0005634">
    <property type="term" value="C:nucleus"/>
    <property type="evidence" value="ECO:0007669"/>
    <property type="project" value="UniProtKB-SubCell"/>
</dbReference>
<dbReference type="GO" id="GO:0046872">
    <property type="term" value="F:metal ion binding"/>
    <property type="evidence" value="ECO:0007669"/>
    <property type="project" value="UniProtKB-KW"/>
</dbReference>
<dbReference type="GO" id="GO:0004518">
    <property type="term" value="F:nuclease activity"/>
    <property type="evidence" value="ECO:0007669"/>
    <property type="project" value="UniProtKB-KW"/>
</dbReference>
<dbReference type="CDD" id="cd01310">
    <property type="entry name" value="TatD_DNAse"/>
    <property type="match status" value="1"/>
</dbReference>
<dbReference type="FunFam" id="3.20.20.140:FF:000225">
    <property type="entry name" value="Putative deoxyribonuclease TATDN3"/>
    <property type="match status" value="1"/>
</dbReference>
<dbReference type="Gene3D" id="3.20.20.140">
    <property type="entry name" value="Metal-dependent hydrolases"/>
    <property type="match status" value="1"/>
</dbReference>
<dbReference type="InterPro" id="IPR032466">
    <property type="entry name" value="Metal_Hydrolase"/>
</dbReference>
<dbReference type="InterPro" id="IPR001130">
    <property type="entry name" value="TatD-like"/>
</dbReference>
<dbReference type="PANTHER" id="PTHR46317:SF7">
    <property type="entry name" value="DEOXYRIBONUCLEASE TATDN3-RELATED"/>
    <property type="match status" value="1"/>
</dbReference>
<dbReference type="PANTHER" id="PTHR46317">
    <property type="entry name" value="HYDROLASE OF PHP SUPERFAMILY-RELATED PROTEIN"/>
    <property type="match status" value="1"/>
</dbReference>
<dbReference type="Pfam" id="PF01026">
    <property type="entry name" value="TatD_DNase"/>
    <property type="match status" value="1"/>
</dbReference>
<dbReference type="PIRSF" id="PIRSF005902">
    <property type="entry name" value="DNase_TatD"/>
    <property type="match status" value="1"/>
</dbReference>
<dbReference type="SUPFAM" id="SSF51556">
    <property type="entry name" value="Metallo-dependent hydrolases"/>
    <property type="match status" value="1"/>
</dbReference>
<organism>
    <name type="scientific">Mus musculus</name>
    <name type="common">Mouse</name>
    <dbReference type="NCBI Taxonomy" id="10090"/>
    <lineage>
        <taxon>Eukaryota</taxon>
        <taxon>Metazoa</taxon>
        <taxon>Chordata</taxon>
        <taxon>Craniata</taxon>
        <taxon>Vertebrata</taxon>
        <taxon>Euteleostomi</taxon>
        <taxon>Mammalia</taxon>
        <taxon>Eutheria</taxon>
        <taxon>Euarchontoglires</taxon>
        <taxon>Glires</taxon>
        <taxon>Rodentia</taxon>
        <taxon>Myomorpha</taxon>
        <taxon>Muroidea</taxon>
        <taxon>Muridae</taxon>
        <taxon>Murinae</taxon>
        <taxon>Mus</taxon>
        <taxon>Mus</taxon>
    </lineage>
</organism>
<keyword id="KW-0025">Alternative splicing</keyword>
<keyword id="KW-0378">Hydrolase</keyword>
<keyword id="KW-0479">Metal-binding</keyword>
<keyword id="KW-0540">Nuclease</keyword>
<keyword id="KW-0539">Nucleus</keyword>
<keyword id="KW-1185">Reference proteome</keyword>
<keyword id="KW-0862">Zinc</keyword>
<sequence>MGLGLVDCHCHLSASDFDNDLDDVLEKARKANVMALVAVAEHAGEFERIMQLSERYNGFVLPCLGVHPVQELSPEKPRSVTLKDLDVALPIIEKYKDRLLAIGEVGLDFTPRYAGTDEEKEEQRQVLIRQVQLAKRLNVPLNVHSRSAGRPTISLLREQGAEQVLLHAFDGRPSVAMEGVRAGYYFSIPPSIVRSGQKQKLVKQLPLSSICLETDSPALGPEKLTRNEPCNISIAAEFIAQVKGISVEEVREVTTRNAFRLFPKLQSLLQKELQSHPLQAKSAQGSAGESKGLL</sequence>
<feature type="chain" id="PRO_0000313596" description="Putative deoxyribonuclease TATDN3">
    <location>
        <begin position="1"/>
        <end position="294"/>
    </location>
</feature>
<feature type="binding site" evidence="1">
    <location>
        <position position="9"/>
    </location>
    <ligand>
        <name>Zn(2+)</name>
        <dbReference type="ChEBI" id="CHEBI:29105"/>
        <label>1</label>
    </ligand>
</feature>
<feature type="binding site" evidence="1">
    <location>
        <position position="11"/>
    </location>
    <ligand>
        <name>Zn(2+)</name>
        <dbReference type="ChEBI" id="CHEBI:29105"/>
        <label>1</label>
    </ligand>
</feature>
<feature type="binding site" evidence="1">
    <location>
        <position position="104"/>
    </location>
    <ligand>
        <name>Zn(2+)</name>
        <dbReference type="ChEBI" id="CHEBI:29105"/>
        <label>1</label>
    </ligand>
</feature>
<feature type="binding site" evidence="1">
    <location>
        <position position="104"/>
    </location>
    <ligand>
        <name>Zn(2+)</name>
        <dbReference type="ChEBI" id="CHEBI:29105"/>
        <label>2</label>
    </ligand>
</feature>
<feature type="binding site" evidence="1">
    <location>
        <position position="144"/>
    </location>
    <ligand>
        <name>Zn(2+)</name>
        <dbReference type="ChEBI" id="CHEBI:29105"/>
        <label>2</label>
    </ligand>
</feature>
<feature type="binding site" evidence="1">
    <location>
        <position position="167"/>
    </location>
    <ligand>
        <name>Zn(2+)</name>
        <dbReference type="ChEBI" id="CHEBI:29105"/>
        <label>2</label>
    </ligand>
</feature>
<feature type="binding site" evidence="1">
    <location>
        <position position="215"/>
    </location>
    <ligand>
        <name>Zn(2+)</name>
        <dbReference type="ChEBI" id="CHEBI:29105"/>
        <label>1</label>
    </ligand>
</feature>
<feature type="splice variant" id="VSP_030049" description="In isoform 3." evidence="4">
    <original>GAEQVLLHAFDGRPSVAMEGVRAGYYFSIP</original>
    <variation>EAEACETAASEFYLLRNRFTCARTRKADTE</variation>
    <location>
        <begin position="160"/>
        <end position="189"/>
    </location>
</feature>
<feature type="splice variant" id="VSP_030050" description="In isoform 3." evidence="4">
    <location>
        <begin position="190"/>
        <end position="294"/>
    </location>
</feature>
<feature type="splice variant" id="VSP_030051" description="In isoform 2." evidence="3">
    <original>TRNEPCNISIAA</original>
    <variation>LCSLSDTE</variation>
    <location>
        <begin position="225"/>
        <end position="236"/>
    </location>
</feature>
<feature type="sequence conflict" description="In Ref. 1; BAB23875." evidence="5" ref="1">
    <original>K</original>
    <variation>R</variation>
    <location>
        <position position="27"/>
    </location>
</feature>
<evidence type="ECO:0000250" key="1">
    <source>
        <dbReference type="UniProtKB" id="Q17R31"/>
    </source>
</evidence>
<evidence type="ECO:0000250" key="2">
    <source>
        <dbReference type="UniProtKB" id="Q6P1N9"/>
    </source>
</evidence>
<evidence type="ECO:0000303" key="3">
    <source>
    </source>
</evidence>
<evidence type="ECO:0000303" key="4">
    <source>
    </source>
</evidence>
<evidence type="ECO:0000305" key="5"/>
<protein>
    <recommendedName>
        <fullName>Putative deoxyribonuclease TATDN3</fullName>
        <ecNumber>3.1.21.-</ecNumber>
    </recommendedName>
</protein>
<proteinExistence type="evidence at protein level"/>
<name>TATD3_MOUSE</name>